<evidence type="ECO:0000255" key="1">
    <source>
        <dbReference type="HAMAP-Rule" id="MF_01465"/>
    </source>
</evidence>
<accession>Q89A85</accession>
<sequence>MIKKKLETKLKNFGNQFSELKQRMYFVIFSLIVFRMGSYIPIPGIDTVALASLLEHHRGTIIEMFNMFSGGALSRASIFALGIMPFISSSIIVQILTLIHPKFIEMKKDGEQGRHRINKYIRYITLILAALQSFGMSISLPNIPGLKDVIIDPSISFYGIAIISLITGTIFLMWLGELITEKGIGNGISIIIFSGIVSGLPSSFLNTVEKVRQGSLHVLLFCFIGIVIFLVTLLVVYIERSQRKITISYAKRNLGHRTYSMNSTHLPLKLNMSGVIPAIFASSIVLFPATIASWFGNRDHFKWLVDIVFYLQPTKPLYILTYITAIIFFCFFYTGLAFNPRETADNLKKSGAFILGIRPGEKTAQYINKIMLRLTFLGSMYMAFICLVPELMRFFMDVPFYFGGTSLLIIVVVIIDFISQVQTYIMSTQYESVLKKNKFRF</sequence>
<name>SECY_BUCBP</name>
<feature type="chain" id="PRO_0000131716" description="Protein translocase subunit SecY">
    <location>
        <begin position="1"/>
        <end position="441"/>
    </location>
</feature>
<feature type="transmembrane region" description="Helical" evidence="1">
    <location>
        <begin position="25"/>
        <end position="45"/>
    </location>
</feature>
<feature type="transmembrane region" description="Helical" evidence="1">
    <location>
        <begin position="78"/>
        <end position="98"/>
    </location>
</feature>
<feature type="transmembrane region" description="Helical" evidence="1">
    <location>
        <begin position="126"/>
        <end position="146"/>
    </location>
</feature>
<feature type="transmembrane region" description="Helical" evidence="1">
    <location>
        <begin position="155"/>
        <end position="175"/>
    </location>
</feature>
<feature type="transmembrane region" description="Helical" evidence="1">
    <location>
        <begin position="184"/>
        <end position="204"/>
    </location>
</feature>
<feature type="transmembrane region" description="Helical" evidence="1">
    <location>
        <begin position="218"/>
        <end position="238"/>
    </location>
</feature>
<feature type="transmembrane region" description="Helical" evidence="1">
    <location>
        <begin position="275"/>
        <end position="295"/>
    </location>
</feature>
<feature type="transmembrane region" description="Helical" evidence="1">
    <location>
        <begin position="318"/>
        <end position="338"/>
    </location>
</feature>
<feature type="transmembrane region" description="Helical" evidence="1">
    <location>
        <begin position="376"/>
        <end position="396"/>
    </location>
</feature>
<feature type="transmembrane region" description="Helical" evidence="1">
    <location>
        <begin position="398"/>
        <end position="418"/>
    </location>
</feature>
<comment type="function">
    <text evidence="1">The central subunit of the protein translocation channel SecYEG. Consists of two halves formed by TMs 1-5 and 6-10. These two domains form a lateral gate at the front which open onto the bilayer between TMs 2 and 7, and are clamped together by SecE at the back. The channel is closed by both a pore ring composed of hydrophobic SecY resides and a short helix (helix 2A) on the extracellular side of the membrane which forms a plug. The plug probably moves laterally to allow the channel to open. The ring and the pore may move independently.</text>
</comment>
<comment type="subunit">
    <text evidence="1">Component of the Sec protein translocase complex. Heterotrimer consisting of SecY, SecE and SecG subunits. The heterotrimers can form oligomers, although 1 heterotrimer is thought to be able to translocate proteins. Interacts with the ribosome. Interacts with SecDF, and other proteins may be involved. Interacts with SecA.</text>
</comment>
<comment type="subcellular location">
    <subcellularLocation>
        <location evidence="1">Cell membrane</location>
        <topology evidence="1">Multi-pass membrane protein</topology>
    </subcellularLocation>
</comment>
<comment type="similarity">
    <text evidence="1">Belongs to the SecY/SEC61-alpha family.</text>
</comment>
<gene>
    <name evidence="1" type="primary">secY</name>
    <name type="ordered locus">bbp_447</name>
</gene>
<keyword id="KW-1003">Cell membrane</keyword>
<keyword id="KW-0472">Membrane</keyword>
<keyword id="KW-0653">Protein transport</keyword>
<keyword id="KW-1185">Reference proteome</keyword>
<keyword id="KW-0811">Translocation</keyword>
<keyword id="KW-0812">Transmembrane</keyword>
<keyword id="KW-1133">Transmembrane helix</keyword>
<keyword id="KW-0813">Transport</keyword>
<dbReference type="EMBL" id="AE016826">
    <property type="protein sequence ID" value="AAO27153.1"/>
    <property type="molecule type" value="Genomic_DNA"/>
</dbReference>
<dbReference type="RefSeq" id="WP_011091554.1">
    <property type="nucleotide sequence ID" value="NC_004545.1"/>
</dbReference>
<dbReference type="SMR" id="Q89A85"/>
<dbReference type="STRING" id="224915.bbp_447"/>
<dbReference type="KEGG" id="bab:bbp_447"/>
<dbReference type="eggNOG" id="COG0201">
    <property type="taxonomic scope" value="Bacteria"/>
</dbReference>
<dbReference type="HOGENOM" id="CLU_030313_0_2_6"/>
<dbReference type="OrthoDB" id="9809248at2"/>
<dbReference type="Proteomes" id="UP000000601">
    <property type="component" value="Chromosome"/>
</dbReference>
<dbReference type="GO" id="GO:0005886">
    <property type="term" value="C:plasma membrane"/>
    <property type="evidence" value="ECO:0007669"/>
    <property type="project" value="UniProtKB-SubCell"/>
</dbReference>
<dbReference type="GO" id="GO:0065002">
    <property type="term" value="P:intracellular protein transmembrane transport"/>
    <property type="evidence" value="ECO:0007669"/>
    <property type="project" value="UniProtKB-UniRule"/>
</dbReference>
<dbReference type="GO" id="GO:0006605">
    <property type="term" value="P:protein targeting"/>
    <property type="evidence" value="ECO:0007669"/>
    <property type="project" value="UniProtKB-UniRule"/>
</dbReference>
<dbReference type="GO" id="GO:0043952">
    <property type="term" value="P:protein transport by the Sec complex"/>
    <property type="evidence" value="ECO:0007669"/>
    <property type="project" value="UniProtKB-UniRule"/>
</dbReference>
<dbReference type="FunFam" id="1.10.3370.10:FF:000001">
    <property type="entry name" value="Preprotein translocase subunit SecY"/>
    <property type="match status" value="1"/>
</dbReference>
<dbReference type="Gene3D" id="1.10.3370.10">
    <property type="entry name" value="SecY subunit domain"/>
    <property type="match status" value="1"/>
</dbReference>
<dbReference type="HAMAP" id="MF_01465">
    <property type="entry name" value="SecY"/>
    <property type="match status" value="1"/>
</dbReference>
<dbReference type="InterPro" id="IPR026593">
    <property type="entry name" value="SecY"/>
</dbReference>
<dbReference type="InterPro" id="IPR002208">
    <property type="entry name" value="SecY/SEC61-alpha"/>
</dbReference>
<dbReference type="InterPro" id="IPR030659">
    <property type="entry name" value="SecY_CS"/>
</dbReference>
<dbReference type="InterPro" id="IPR023201">
    <property type="entry name" value="SecY_dom_sf"/>
</dbReference>
<dbReference type="NCBIfam" id="TIGR00967">
    <property type="entry name" value="3a0501s007"/>
    <property type="match status" value="1"/>
</dbReference>
<dbReference type="PANTHER" id="PTHR10906">
    <property type="entry name" value="SECY/SEC61-ALPHA FAMILY MEMBER"/>
    <property type="match status" value="1"/>
</dbReference>
<dbReference type="Pfam" id="PF00344">
    <property type="entry name" value="SecY"/>
    <property type="match status" value="1"/>
</dbReference>
<dbReference type="PIRSF" id="PIRSF004557">
    <property type="entry name" value="SecY"/>
    <property type="match status" value="1"/>
</dbReference>
<dbReference type="PRINTS" id="PR00303">
    <property type="entry name" value="SECYTRNLCASE"/>
</dbReference>
<dbReference type="SUPFAM" id="SSF103491">
    <property type="entry name" value="Preprotein translocase SecY subunit"/>
    <property type="match status" value="1"/>
</dbReference>
<dbReference type="PROSITE" id="PS00755">
    <property type="entry name" value="SECY_1"/>
    <property type="match status" value="1"/>
</dbReference>
<dbReference type="PROSITE" id="PS00756">
    <property type="entry name" value="SECY_2"/>
    <property type="match status" value="1"/>
</dbReference>
<organism>
    <name type="scientific">Buchnera aphidicola subsp. Baizongia pistaciae (strain Bp)</name>
    <dbReference type="NCBI Taxonomy" id="224915"/>
    <lineage>
        <taxon>Bacteria</taxon>
        <taxon>Pseudomonadati</taxon>
        <taxon>Pseudomonadota</taxon>
        <taxon>Gammaproteobacteria</taxon>
        <taxon>Enterobacterales</taxon>
        <taxon>Erwiniaceae</taxon>
        <taxon>Buchnera</taxon>
    </lineage>
</organism>
<protein>
    <recommendedName>
        <fullName evidence="1">Protein translocase subunit SecY</fullName>
    </recommendedName>
</protein>
<reference key="1">
    <citation type="journal article" date="2003" name="Proc. Natl. Acad. Sci. U.S.A.">
        <title>Reductive genome evolution in Buchnera aphidicola.</title>
        <authorList>
            <person name="van Ham R.C.H.J."/>
            <person name="Kamerbeek J."/>
            <person name="Palacios C."/>
            <person name="Rausell C."/>
            <person name="Abascal F."/>
            <person name="Bastolla U."/>
            <person name="Fernandez J.M."/>
            <person name="Jimenez L."/>
            <person name="Postigo M."/>
            <person name="Silva F.J."/>
            <person name="Tamames J."/>
            <person name="Viguera E."/>
            <person name="Latorre A."/>
            <person name="Valencia A."/>
            <person name="Moran F."/>
            <person name="Moya A."/>
        </authorList>
    </citation>
    <scope>NUCLEOTIDE SEQUENCE [LARGE SCALE GENOMIC DNA]</scope>
    <source>
        <strain>Bp</strain>
    </source>
</reference>
<proteinExistence type="inferred from homology"/>